<dbReference type="EC" id="2.7.11.22"/>
<dbReference type="EMBL" id="L11007">
    <property type="protein sequence ID" value="AAA40903.1"/>
    <property type="molecule type" value="mRNA"/>
</dbReference>
<dbReference type="EMBL" id="BC070956">
    <property type="protein sequence ID" value="AAH70956.1"/>
    <property type="molecule type" value="mRNA"/>
</dbReference>
<dbReference type="PIR" id="JN0460">
    <property type="entry name" value="JN0460"/>
</dbReference>
<dbReference type="RefSeq" id="NP_446045.1">
    <property type="nucleotide sequence ID" value="NM_053593.3"/>
</dbReference>
<dbReference type="SMR" id="P35426"/>
<dbReference type="BioGRID" id="250181">
    <property type="interactions" value="4"/>
</dbReference>
<dbReference type="ComplexPortal" id="CPX-2075">
    <property type="entry name" value="Cyclin D1-CDK4 complex"/>
</dbReference>
<dbReference type="ComplexPortal" id="CPX-2076">
    <property type="entry name" value="Cyclin D2-CDK4 complex"/>
</dbReference>
<dbReference type="ComplexPortal" id="CPX-2078">
    <property type="entry name" value="Cyclin D3-CDK4 complex"/>
</dbReference>
<dbReference type="FunCoup" id="P35426">
    <property type="interactions" value="1646"/>
</dbReference>
<dbReference type="STRING" id="10116.ENSRNOP00000034754"/>
<dbReference type="iPTMnet" id="P35426"/>
<dbReference type="PhosphoSitePlus" id="P35426"/>
<dbReference type="jPOST" id="P35426"/>
<dbReference type="PaxDb" id="10116-ENSRNOP00000034754"/>
<dbReference type="GeneID" id="94201"/>
<dbReference type="KEGG" id="rno:94201"/>
<dbReference type="AGR" id="RGD:621120"/>
<dbReference type="CTD" id="1019"/>
<dbReference type="RGD" id="621120">
    <property type="gene designation" value="Cdk4"/>
</dbReference>
<dbReference type="VEuPathDB" id="HostDB:ENSRNOG00000025602"/>
<dbReference type="eggNOG" id="KOG0594">
    <property type="taxonomic scope" value="Eukaryota"/>
</dbReference>
<dbReference type="HOGENOM" id="CLU_000288_181_1_1"/>
<dbReference type="InParanoid" id="P35426"/>
<dbReference type="OrthoDB" id="19586at9989"/>
<dbReference type="PhylomeDB" id="P35426"/>
<dbReference type="BRENDA" id="2.7.11.22">
    <property type="organism ID" value="5301"/>
</dbReference>
<dbReference type="Reactome" id="R-RNO-187577">
    <property type="pathway name" value="SCF(Skp2)-mediated degradation of p27/p21"/>
</dbReference>
<dbReference type="Reactome" id="R-RNO-2559580">
    <property type="pathway name" value="Oxidative Stress Induced Senescence"/>
</dbReference>
<dbReference type="Reactome" id="R-RNO-2559582">
    <property type="pathway name" value="Senescence-Associated Secretory Phenotype (SASP)"/>
</dbReference>
<dbReference type="Reactome" id="R-RNO-2559585">
    <property type="pathway name" value="Oncogene Induced Senescence"/>
</dbReference>
<dbReference type="Reactome" id="R-RNO-3214858">
    <property type="pathway name" value="RMTs methylate histone arginines"/>
</dbReference>
<dbReference type="Reactome" id="R-RNO-69231">
    <property type="pathway name" value="Cyclin D associated events in G1"/>
</dbReference>
<dbReference type="Reactome" id="R-RNO-75815">
    <property type="pathway name" value="Ubiquitin-dependent degradation of Cyclin D"/>
</dbReference>
<dbReference type="Reactome" id="R-RNO-8849470">
    <property type="pathway name" value="PTK6 Regulates Cell Cycle"/>
</dbReference>
<dbReference type="Reactome" id="R-RNO-9616222">
    <property type="pathway name" value="Transcriptional regulation of granulopoiesis"/>
</dbReference>
<dbReference type="Reactome" id="R-RNO-9754119">
    <property type="pathway name" value="Drug-mediated inhibition of CDK4/CDK6 activity"/>
</dbReference>
<dbReference type="PRO" id="PR:P35426"/>
<dbReference type="Proteomes" id="UP000002494">
    <property type="component" value="Chromosome 7"/>
</dbReference>
<dbReference type="Bgee" id="ENSRNOG00000025602">
    <property type="expression patterns" value="Expressed in thymus and 19 other cell types or tissues"/>
</dbReference>
<dbReference type="GO" id="GO:0005923">
    <property type="term" value="C:bicellular tight junction"/>
    <property type="evidence" value="ECO:0000266"/>
    <property type="project" value="RGD"/>
</dbReference>
<dbReference type="GO" id="GO:0000785">
    <property type="term" value="C:chromatin"/>
    <property type="evidence" value="ECO:0000266"/>
    <property type="project" value="RGD"/>
</dbReference>
<dbReference type="GO" id="GO:0097128">
    <property type="term" value="C:cyclin D1-CDK4 complex"/>
    <property type="evidence" value="ECO:0000266"/>
    <property type="project" value="RGD"/>
</dbReference>
<dbReference type="GO" id="GO:0097129">
    <property type="term" value="C:cyclin D2-CDK4 complex"/>
    <property type="evidence" value="ECO:0000266"/>
    <property type="project" value="RGD"/>
</dbReference>
<dbReference type="GO" id="GO:0097130">
    <property type="term" value="C:cyclin D3-CDK4 complex"/>
    <property type="evidence" value="ECO:0000266"/>
    <property type="project" value="RGD"/>
</dbReference>
<dbReference type="GO" id="GO:0000307">
    <property type="term" value="C:cyclin-dependent protein kinase holoenzyme complex"/>
    <property type="evidence" value="ECO:0000266"/>
    <property type="project" value="RGD"/>
</dbReference>
<dbReference type="GO" id="GO:0005737">
    <property type="term" value="C:cytoplasm"/>
    <property type="evidence" value="ECO:0000314"/>
    <property type="project" value="RGD"/>
</dbReference>
<dbReference type="GO" id="GO:0005829">
    <property type="term" value="C:cytosol"/>
    <property type="evidence" value="ECO:0000266"/>
    <property type="project" value="RGD"/>
</dbReference>
<dbReference type="GO" id="GO:0031965">
    <property type="term" value="C:nuclear membrane"/>
    <property type="evidence" value="ECO:0000266"/>
    <property type="project" value="RGD"/>
</dbReference>
<dbReference type="GO" id="GO:0005730">
    <property type="term" value="C:nucleolus"/>
    <property type="evidence" value="ECO:0000266"/>
    <property type="project" value="RGD"/>
</dbReference>
<dbReference type="GO" id="GO:0005634">
    <property type="term" value="C:nucleus"/>
    <property type="evidence" value="ECO:0000314"/>
    <property type="project" value="RGD"/>
</dbReference>
<dbReference type="GO" id="GO:0048471">
    <property type="term" value="C:perinuclear region of cytoplasm"/>
    <property type="evidence" value="ECO:0000314"/>
    <property type="project" value="RGD"/>
</dbReference>
<dbReference type="GO" id="GO:0005667">
    <property type="term" value="C:transcription regulator complex"/>
    <property type="evidence" value="ECO:0000266"/>
    <property type="project" value="RGD"/>
</dbReference>
<dbReference type="GO" id="GO:0005524">
    <property type="term" value="F:ATP binding"/>
    <property type="evidence" value="ECO:0007669"/>
    <property type="project" value="UniProtKB-KW"/>
</dbReference>
<dbReference type="GO" id="GO:0030332">
    <property type="term" value="F:cyclin binding"/>
    <property type="evidence" value="ECO:0000353"/>
    <property type="project" value="RGD"/>
</dbReference>
<dbReference type="GO" id="GO:0004693">
    <property type="term" value="F:cyclin-dependent protein serine/threonine kinase activity"/>
    <property type="evidence" value="ECO:0000314"/>
    <property type="project" value="RGD"/>
</dbReference>
<dbReference type="GO" id="GO:0016301">
    <property type="term" value="F:kinase activity"/>
    <property type="evidence" value="ECO:0000266"/>
    <property type="project" value="RGD"/>
</dbReference>
<dbReference type="GO" id="GO:0004672">
    <property type="term" value="F:protein kinase activity"/>
    <property type="evidence" value="ECO:0000266"/>
    <property type="project" value="RGD"/>
</dbReference>
<dbReference type="GO" id="GO:0106310">
    <property type="term" value="F:protein serine kinase activity"/>
    <property type="evidence" value="ECO:0007669"/>
    <property type="project" value="RHEA"/>
</dbReference>
<dbReference type="GO" id="GO:0044877">
    <property type="term" value="F:protein-containing complex binding"/>
    <property type="evidence" value="ECO:0000353"/>
    <property type="project" value="RGD"/>
</dbReference>
<dbReference type="GO" id="GO:0031100">
    <property type="term" value="P:animal organ regeneration"/>
    <property type="evidence" value="ECO:0000270"/>
    <property type="project" value="RGD"/>
</dbReference>
<dbReference type="GO" id="GO:0051301">
    <property type="term" value="P:cell division"/>
    <property type="evidence" value="ECO:0007669"/>
    <property type="project" value="UniProtKB-KW"/>
</dbReference>
<dbReference type="GO" id="GO:0071353">
    <property type="term" value="P:cellular response to interleukin-4"/>
    <property type="evidence" value="ECO:0000266"/>
    <property type="project" value="RGD"/>
</dbReference>
<dbReference type="GO" id="GO:1904637">
    <property type="term" value="P:cellular response to ionomycin"/>
    <property type="evidence" value="ECO:0000266"/>
    <property type="project" value="RGD"/>
</dbReference>
<dbReference type="GO" id="GO:0071222">
    <property type="term" value="P:cellular response to lipopolysaccharide"/>
    <property type="evidence" value="ECO:0000266"/>
    <property type="project" value="RGD"/>
</dbReference>
<dbReference type="GO" id="GO:1904628">
    <property type="term" value="P:cellular response to phorbol 13-acetate 12-myristate"/>
    <property type="evidence" value="ECO:0000266"/>
    <property type="project" value="RGD"/>
</dbReference>
<dbReference type="GO" id="GO:1904584">
    <property type="term" value="P:cellular response to polyamine macromolecule"/>
    <property type="evidence" value="ECO:0000270"/>
    <property type="project" value="RGD"/>
</dbReference>
<dbReference type="GO" id="GO:0007623">
    <property type="term" value="P:circadian rhythm"/>
    <property type="evidence" value="ECO:0000270"/>
    <property type="project" value="RGD"/>
</dbReference>
<dbReference type="GO" id="GO:0000082">
    <property type="term" value="P:G1/S transition of mitotic cell cycle"/>
    <property type="evidence" value="ECO:0000266"/>
    <property type="project" value="RGD"/>
</dbReference>
<dbReference type="GO" id="GO:0002088">
    <property type="term" value="P:lens development in camera-type eye"/>
    <property type="evidence" value="ECO:0000270"/>
    <property type="project" value="RGD"/>
</dbReference>
<dbReference type="GO" id="GO:0043065">
    <property type="term" value="P:positive regulation of apoptotic process"/>
    <property type="evidence" value="ECO:0000315"/>
    <property type="project" value="RGD"/>
</dbReference>
<dbReference type="GO" id="GO:0008284">
    <property type="term" value="P:positive regulation of cell population proliferation"/>
    <property type="evidence" value="ECO:0000315"/>
    <property type="project" value="RGD"/>
</dbReference>
<dbReference type="GO" id="GO:0045793">
    <property type="term" value="P:positive regulation of cell size"/>
    <property type="evidence" value="ECO:0000315"/>
    <property type="project" value="RGD"/>
</dbReference>
<dbReference type="GO" id="GO:0050679">
    <property type="term" value="P:positive regulation of epithelial cell proliferation"/>
    <property type="evidence" value="ECO:0000315"/>
    <property type="project" value="RGD"/>
</dbReference>
<dbReference type="GO" id="GO:0048146">
    <property type="term" value="P:positive regulation of fibroblast proliferation"/>
    <property type="evidence" value="ECO:0000266"/>
    <property type="project" value="RGD"/>
</dbReference>
<dbReference type="GO" id="GO:0010971">
    <property type="term" value="P:positive regulation of G2/M transition of mitotic cell cycle"/>
    <property type="evidence" value="ECO:0000250"/>
    <property type="project" value="UniProtKB"/>
</dbReference>
<dbReference type="GO" id="GO:0045727">
    <property type="term" value="P:positive regulation of translation"/>
    <property type="evidence" value="ECO:0000315"/>
    <property type="project" value="RGD"/>
</dbReference>
<dbReference type="GO" id="GO:0051726">
    <property type="term" value="P:regulation of cell cycle"/>
    <property type="evidence" value="ECO:0000266"/>
    <property type="project" value="RGD"/>
</dbReference>
<dbReference type="GO" id="GO:0010389">
    <property type="term" value="P:regulation of G2/M transition of mitotic cell cycle"/>
    <property type="evidence" value="ECO:0000318"/>
    <property type="project" value="GO_Central"/>
</dbReference>
<dbReference type="GO" id="GO:0010468">
    <property type="term" value="P:regulation of gene expression"/>
    <property type="evidence" value="ECO:0000266"/>
    <property type="project" value="RGD"/>
</dbReference>
<dbReference type="GO" id="GO:0061469">
    <property type="term" value="P:regulation of type B pancreatic cell proliferation"/>
    <property type="evidence" value="ECO:0000266"/>
    <property type="project" value="RGD"/>
</dbReference>
<dbReference type="GO" id="GO:0055093">
    <property type="term" value="P:response to hyperoxia"/>
    <property type="evidence" value="ECO:0000270"/>
    <property type="project" value="RGD"/>
</dbReference>
<dbReference type="GO" id="GO:0033574">
    <property type="term" value="P:response to testosterone"/>
    <property type="evidence" value="ECO:0000314"/>
    <property type="project" value="RGD"/>
</dbReference>
<dbReference type="GO" id="GO:0009636">
    <property type="term" value="P:response to toxic substance"/>
    <property type="evidence" value="ECO:0000270"/>
    <property type="project" value="RGD"/>
</dbReference>
<dbReference type="GO" id="GO:0009410">
    <property type="term" value="P:response to xenobiotic stimulus"/>
    <property type="evidence" value="ECO:0000266"/>
    <property type="project" value="RGD"/>
</dbReference>
<dbReference type="GO" id="GO:0007165">
    <property type="term" value="P:signal transduction"/>
    <property type="evidence" value="ECO:0000266"/>
    <property type="project" value="RGD"/>
</dbReference>
<dbReference type="FunFam" id="3.30.200.20:FF:000124">
    <property type="entry name" value="Cyclin-dependent kinase 4"/>
    <property type="match status" value="1"/>
</dbReference>
<dbReference type="FunFam" id="1.10.510.10:FF:000205">
    <property type="entry name" value="Cyclin-dependent kinase 6"/>
    <property type="match status" value="1"/>
</dbReference>
<dbReference type="Gene3D" id="3.30.200.20">
    <property type="entry name" value="Phosphorylase Kinase, domain 1"/>
    <property type="match status" value="1"/>
</dbReference>
<dbReference type="Gene3D" id="1.10.510.10">
    <property type="entry name" value="Transferase(Phosphotransferase) domain 1"/>
    <property type="match status" value="1"/>
</dbReference>
<dbReference type="InterPro" id="IPR050108">
    <property type="entry name" value="CDK"/>
</dbReference>
<dbReference type="InterPro" id="IPR011009">
    <property type="entry name" value="Kinase-like_dom_sf"/>
</dbReference>
<dbReference type="InterPro" id="IPR000719">
    <property type="entry name" value="Prot_kinase_dom"/>
</dbReference>
<dbReference type="InterPro" id="IPR017441">
    <property type="entry name" value="Protein_kinase_ATP_BS"/>
</dbReference>
<dbReference type="InterPro" id="IPR008271">
    <property type="entry name" value="Ser/Thr_kinase_AS"/>
</dbReference>
<dbReference type="PANTHER" id="PTHR24056">
    <property type="entry name" value="CELL DIVISION PROTEIN KINASE"/>
    <property type="match status" value="1"/>
</dbReference>
<dbReference type="PANTHER" id="PTHR24056:SF129">
    <property type="entry name" value="CYCLIN-DEPENDENT KINASE 4"/>
    <property type="match status" value="1"/>
</dbReference>
<dbReference type="Pfam" id="PF00069">
    <property type="entry name" value="Pkinase"/>
    <property type="match status" value="1"/>
</dbReference>
<dbReference type="SMART" id="SM00220">
    <property type="entry name" value="S_TKc"/>
    <property type="match status" value="1"/>
</dbReference>
<dbReference type="SUPFAM" id="SSF56112">
    <property type="entry name" value="Protein kinase-like (PK-like)"/>
    <property type="match status" value="1"/>
</dbReference>
<dbReference type="PROSITE" id="PS00107">
    <property type="entry name" value="PROTEIN_KINASE_ATP"/>
    <property type="match status" value="1"/>
</dbReference>
<dbReference type="PROSITE" id="PS50011">
    <property type="entry name" value="PROTEIN_KINASE_DOM"/>
    <property type="match status" value="1"/>
</dbReference>
<dbReference type="PROSITE" id="PS00108">
    <property type="entry name" value="PROTEIN_KINASE_ST"/>
    <property type="match status" value="1"/>
</dbReference>
<feature type="initiator methionine" description="Removed" evidence="2">
    <location>
        <position position="1"/>
    </location>
</feature>
<feature type="chain" id="PRO_0000085781" description="Cyclin-dependent kinase 4">
    <location>
        <begin position="2"/>
        <end position="303"/>
    </location>
</feature>
<feature type="domain" description="Protein kinase" evidence="4">
    <location>
        <begin position="6"/>
        <end position="295"/>
    </location>
</feature>
<feature type="region of interest" description="Required for binding D-type cyclins" evidence="1">
    <location>
        <begin position="50"/>
        <end position="56"/>
    </location>
</feature>
<feature type="active site" description="Proton acceptor" evidence="4 5">
    <location>
        <position position="140"/>
    </location>
</feature>
<feature type="binding site" evidence="4">
    <location>
        <begin position="12"/>
        <end position="20"/>
    </location>
    <ligand>
        <name>ATP</name>
        <dbReference type="ChEBI" id="CHEBI:30616"/>
    </ligand>
</feature>
<feature type="binding site" evidence="4">
    <location>
        <position position="35"/>
    </location>
    <ligand>
        <name>ATP</name>
        <dbReference type="ChEBI" id="CHEBI:30616"/>
    </ligand>
</feature>
<feature type="modified residue" description="N-acetylalanine" evidence="2">
    <location>
        <position position="2"/>
    </location>
</feature>
<feature type="modified residue" description="Phosphothreonine; by CAK" evidence="3">
    <location>
        <position position="172"/>
    </location>
</feature>
<feature type="modified residue" description="Phosphoserine" evidence="8">
    <location>
        <position position="300"/>
    </location>
</feature>
<reference key="1">
    <citation type="journal article" date="1993" name="Biochem. Biophys. Res. Commun.">
        <title>Cloning of the rat cyclin-dependent kinase 4 cDNA: implication in proliferation-dependent expression in rat tissues.</title>
        <authorList>
            <person name="Cho F.S."/>
            <person name="Phillips K.S."/>
            <person name="Khan S.A."/>
            <person name="Weaver T.E."/>
        </authorList>
    </citation>
    <scope>NUCLEOTIDE SEQUENCE [MRNA]</scope>
    <scope>TISSUE SPECIFICITY</scope>
    <scope>DEVELOPMENTAL STAGE</scope>
    <source>
        <tissue>Fetal lung</tissue>
    </source>
</reference>
<reference key="2">
    <citation type="journal article" date="2004" name="Genome Res.">
        <title>The status, quality, and expansion of the NIH full-length cDNA project: the Mammalian Gene Collection (MGC).</title>
        <authorList>
            <consortium name="The MGC Project Team"/>
        </authorList>
    </citation>
    <scope>NUCLEOTIDE SEQUENCE [LARGE SCALE MRNA]</scope>
    <source>
        <tissue>Heart</tissue>
    </source>
</reference>
<reference key="3">
    <citation type="journal article" date="2012" name="Nat. Commun.">
        <title>Quantitative maps of protein phosphorylation sites across 14 different rat organs and tissues.</title>
        <authorList>
            <person name="Lundby A."/>
            <person name="Secher A."/>
            <person name="Lage K."/>
            <person name="Nordsborg N.B."/>
            <person name="Dmytriyev A."/>
            <person name="Lundby C."/>
            <person name="Olsen J.V."/>
        </authorList>
    </citation>
    <scope>PHOSPHORYLATION [LARGE SCALE ANALYSIS] AT SER-300</scope>
    <scope>IDENTIFICATION BY MASS SPECTROMETRY [LARGE SCALE ANALYSIS]</scope>
</reference>
<comment type="function">
    <text evidence="2">Ser/Thr-kinase component of cyclin D-CDK4 (DC) complexes that phosphorylate and inhibit members of the retinoblastoma (RB) protein family including RB1 and regulate the cell-cycle during G(1)/S transition. Phosphorylation of RB1 allows dissociation of the transcription factor E2F from the RB/E2F complexes and the subsequent transcription of E2F target genes which are responsible for the progression through the G(1) phase. Hypophosphorylates RB1 in early G(1) phase. Cyclin D-CDK4 complexes are major integrators of various mitogenenic and antimitogenic signals. Also phosphorylates SMAD3 in a cell-cycle-dependent manner and represses its transcriptional activity. Component of the ternary complex, cyclin D/CDK4/CDKN1B, required for nuclear translocation and activity of the cyclin D-CDK4 complex (By similarity).</text>
</comment>
<comment type="catalytic activity">
    <reaction>
        <text>L-seryl-[protein] + ATP = O-phospho-L-seryl-[protein] + ADP + H(+)</text>
        <dbReference type="Rhea" id="RHEA:17989"/>
        <dbReference type="Rhea" id="RHEA-COMP:9863"/>
        <dbReference type="Rhea" id="RHEA-COMP:11604"/>
        <dbReference type="ChEBI" id="CHEBI:15378"/>
        <dbReference type="ChEBI" id="CHEBI:29999"/>
        <dbReference type="ChEBI" id="CHEBI:30616"/>
        <dbReference type="ChEBI" id="CHEBI:83421"/>
        <dbReference type="ChEBI" id="CHEBI:456216"/>
        <dbReference type="EC" id="2.7.11.22"/>
    </reaction>
</comment>
<comment type="catalytic activity">
    <reaction>
        <text>L-threonyl-[protein] + ATP = O-phospho-L-threonyl-[protein] + ADP + H(+)</text>
        <dbReference type="Rhea" id="RHEA:46608"/>
        <dbReference type="Rhea" id="RHEA-COMP:11060"/>
        <dbReference type="Rhea" id="RHEA-COMP:11605"/>
        <dbReference type="ChEBI" id="CHEBI:15378"/>
        <dbReference type="ChEBI" id="CHEBI:30013"/>
        <dbReference type="ChEBI" id="CHEBI:30616"/>
        <dbReference type="ChEBI" id="CHEBI:61977"/>
        <dbReference type="ChEBI" id="CHEBI:456216"/>
        <dbReference type="EC" id="2.7.11.22"/>
    </reaction>
</comment>
<comment type="activity regulation">
    <text evidence="2">Both phosphorylation at Thr-172 and binding of a D-type cyclin are necessary for enzymatic activity. Full activation of the cyclin-D-CDK4 complex appears to require other factors such as recruitment of the substrate via a substrate recruitment motif, and/or formation of the CDKN1B ternary complex. Inhibited by INK4 family members. In resting cells, the non-tyrosine-phosphorylated form of CDKN1B prevents phosphorylation at Thr-172 and inactivation, while, in proliferating cells, tyrosine phosphorylation of CDKN1B allows phosphorylation of Thr-172 of CDK4 and subsequent activation.</text>
</comment>
<comment type="subunit">
    <text evidence="2 3">Component of the D-CDK4 complex, composed of CDK4 and some D-type G1 cyclin (CCND1, CCND2 or CCND3). Interacts directly in the complex with CCND1, CCND2 or CCND3. Interacts with SEI1 and ZNF655. Forms a ternary complex, cyclin D-CDK4-CDKN1B, involved in modulating CDK4 enzymatic activity. Interacts directly with CDKN1B (phosphorylated on 'Tyr-88' and 'Tyr-89'); the interaction allows assembly of the cyclin D-CDK4 complex, Thr-172 phosphorylation, nuclear translocation and enhances the cyclin D-CDK4 complex activity. CDK4 activity is either inhibited or enhanced depending on stoichiometry of complex. The non-tyrosine-phosphorylated form of CDKN1B prevents T-loop phosphorylation of CDK4 producing inactive CDK4. Interacts (unphosphorylated form) with CDK2. Also forms ternary complexes with CDKN1A or CDKN2A. Interacts directly with CDKN1A (via its N-terminal); the interaction promotes the assembly of the cyclin D-CDK4 complex, its nuclear translocation and promotes the cyclin D-dependent enzyme activity of CDK4. Interacts with CCND1; the interaction is prevented with the binding of CCND1 to INSM1 during cell cycle progression. Probably forms a complex composed of chaperones HSP90 and HSP70, co-chaperones CDC37, PPP5C, TSC1 and client protein TSC2, CDK4, AKT, RAF1 and NR3C1; this complex does not contain co-chaperones STIP1/HOP and PTGES3/p23. Interacts with CEBPA (when phosphorylated). Interacts with FNIP1 and FNIP2.</text>
</comment>
<comment type="subcellular location">
    <subcellularLocation>
        <location evidence="2">Cytoplasm</location>
    </subcellularLocation>
    <subcellularLocation>
        <location evidence="2">Nucleus</location>
    </subcellularLocation>
    <subcellularLocation>
        <location evidence="2">Nucleus membrane</location>
    </subcellularLocation>
    <text evidence="2">Cytoplasmic when non-complexed. Forms a cyclin D-CDK4 complex in the cytoplasm as cells progress through G(1) phase. The complex accumulates on the nuclear membrane and enters the nucleus on transition from G(1) to S phase. Also present in nucleoli and heterochromatin lumps. Colocalizes with RB1 after release into the nucleus (By similarity).</text>
</comment>
<comment type="tissue specificity">
    <text evidence="6">Expressed in fetal and adult lung. Also expressed in brain, heart, liver, skeletal muscle and testes.</text>
</comment>
<comment type="developmental stage">
    <text evidence="6">In developing lung, high expression at day 17 after which levels decline to barely detectable levels at birth. Levels then increase postnatally until postnatal day 6 and decline in adulthood. Preferentially expressed in proliferating cells.</text>
</comment>
<comment type="similarity">
    <text evidence="7">Belongs to the protein kinase superfamily. CMGC Ser/Thr protein kinase family. CDC2/CDKX subfamily.</text>
</comment>
<proteinExistence type="evidence at protein level"/>
<evidence type="ECO:0000250" key="1"/>
<evidence type="ECO:0000250" key="2">
    <source>
        <dbReference type="UniProtKB" id="P11802"/>
    </source>
</evidence>
<evidence type="ECO:0000250" key="3">
    <source>
        <dbReference type="UniProtKB" id="P30285"/>
    </source>
</evidence>
<evidence type="ECO:0000255" key="4">
    <source>
        <dbReference type="PROSITE-ProRule" id="PRU00159"/>
    </source>
</evidence>
<evidence type="ECO:0000255" key="5">
    <source>
        <dbReference type="PROSITE-ProRule" id="PRU10027"/>
    </source>
</evidence>
<evidence type="ECO:0000269" key="6">
    <source>
    </source>
</evidence>
<evidence type="ECO:0000305" key="7"/>
<evidence type="ECO:0007744" key="8">
    <source>
    </source>
</evidence>
<accession>P35426</accession>
<keyword id="KW-0007">Acetylation</keyword>
<keyword id="KW-0067">ATP-binding</keyword>
<keyword id="KW-0131">Cell cycle</keyword>
<keyword id="KW-0132">Cell division</keyword>
<keyword id="KW-0963">Cytoplasm</keyword>
<keyword id="KW-0418">Kinase</keyword>
<keyword id="KW-0472">Membrane</keyword>
<keyword id="KW-0547">Nucleotide-binding</keyword>
<keyword id="KW-0539">Nucleus</keyword>
<keyword id="KW-0597">Phosphoprotein</keyword>
<keyword id="KW-0656">Proto-oncogene</keyword>
<keyword id="KW-1185">Reference proteome</keyword>
<keyword id="KW-0723">Serine/threonine-protein kinase</keyword>
<keyword id="KW-0808">Transferase</keyword>
<protein>
    <recommendedName>
        <fullName>Cyclin-dependent kinase 4</fullName>
        <ecNumber>2.7.11.22</ecNumber>
    </recommendedName>
    <alternativeName>
        <fullName>Cell division protein kinase 4</fullName>
    </alternativeName>
    <alternativeName>
        <fullName>PSK-J3</fullName>
    </alternativeName>
</protein>
<name>CDK4_RAT</name>
<organism>
    <name type="scientific">Rattus norvegicus</name>
    <name type="common">Rat</name>
    <dbReference type="NCBI Taxonomy" id="10116"/>
    <lineage>
        <taxon>Eukaryota</taxon>
        <taxon>Metazoa</taxon>
        <taxon>Chordata</taxon>
        <taxon>Craniata</taxon>
        <taxon>Vertebrata</taxon>
        <taxon>Euteleostomi</taxon>
        <taxon>Mammalia</taxon>
        <taxon>Eutheria</taxon>
        <taxon>Euarchontoglires</taxon>
        <taxon>Glires</taxon>
        <taxon>Rodentia</taxon>
        <taxon>Myomorpha</taxon>
        <taxon>Muroidea</taxon>
        <taxon>Muridae</taxon>
        <taxon>Murinae</taxon>
        <taxon>Rattus</taxon>
    </lineage>
</organism>
<gene>
    <name type="primary">Cdk4</name>
</gene>
<sequence>MATTRYEPVAEIGVGAYGTVYKARDPHSGHFVALKSVRVPNGGAAGGGLPVSTVREVALLRRLEAFEHPNVVRLMDVCATSRTDRDIKVTLVFEHIDQDLRTYLDKAPPPGLPVETIKDLMRQFLSGLDFLHANCIVHRDLKPENILVTSNGTVKLADFGLARIYSYQMALTPVVVTLWYRAPEVLLQSTYATPVDMWSVGCIFAEMFRRKPLFCGNSEADQLGKIFDLIGLPPEDDWPREVSLPRGAFSPRGPRPVQSVVPEMEESGAQLLLEMLTFNPLKRISAFRALQHSYLHKEESDPE</sequence>